<dbReference type="EMBL" id="CP000668">
    <property type="protein sequence ID" value="ABP39919.1"/>
    <property type="molecule type" value="Genomic_DNA"/>
</dbReference>
<dbReference type="RefSeq" id="WP_002213058.1">
    <property type="nucleotide sequence ID" value="NZ_CP009715.1"/>
</dbReference>
<dbReference type="KEGG" id="ypp:YPDSF_1532"/>
<dbReference type="PATRIC" id="fig|386656.14.peg.2240"/>
<dbReference type="HAMAP" id="MF_00789">
    <property type="entry name" value="UPF0319"/>
    <property type="match status" value="1"/>
</dbReference>
<dbReference type="InterPro" id="IPR018635">
    <property type="entry name" value="UPF0319"/>
</dbReference>
<dbReference type="NCBIfam" id="NF002967">
    <property type="entry name" value="PRK03641.1"/>
    <property type="match status" value="1"/>
</dbReference>
<dbReference type="PANTHER" id="PTHR38108">
    <property type="entry name" value="UPF0319 PROTEIN YCCT"/>
    <property type="match status" value="1"/>
</dbReference>
<dbReference type="PANTHER" id="PTHR38108:SF1">
    <property type="entry name" value="UPF0319 PROTEIN YCCT"/>
    <property type="match status" value="1"/>
</dbReference>
<dbReference type="Pfam" id="PF09829">
    <property type="entry name" value="DUF2057"/>
    <property type="match status" value="1"/>
</dbReference>
<organism>
    <name type="scientific">Yersinia pestis (strain Pestoides F)</name>
    <dbReference type="NCBI Taxonomy" id="386656"/>
    <lineage>
        <taxon>Bacteria</taxon>
        <taxon>Pseudomonadati</taxon>
        <taxon>Pseudomonadota</taxon>
        <taxon>Gammaproteobacteria</taxon>
        <taxon>Enterobacterales</taxon>
        <taxon>Yersiniaceae</taxon>
        <taxon>Yersinia</taxon>
    </lineage>
</organism>
<evidence type="ECO:0000255" key="1">
    <source>
        <dbReference type="HAMAP-Rule" id="MF_00789"/>
    </source>
</evidence>
<keyword id="KW-0732">Signal</keyword>
<protein>
    <recommendedName>
        <fullName evidence="1">UPF0319 protein YPDSF_1532</fullName>
    </recommendedName>
</protein>
<feature type="signal peptide" evidence="1">
    <location>
        <begin position="1"/>
        <end position="20"/>
    </location>
</feature>
<feature type="chain" id="PRO_5000236746" description="UPF0319 protein YPDSF_1532">
    <location>
        <begin position="21"/>
        <end position="226"/>
    </location>
</feature>
<gene>
    <name type="ordered locus">YPDSF_1532</name>
</gene>
<name>Y1532_YERPP</name>
<proteinExistence type="inferred from homology"/>
<comment type="similarity">
    <text evidence="1">Belongs to the UPF0319 family.</text>
</comment>
<accession>A4TKV7</accession>
<sequence>MKLGLVAGMLAVCFSFSSVAMTLKLTPEIDLLVVDGKNMSGSLLKGADSLELNSGMHQILFKVIKPLPTDPLVLYSSPPLIVVFNAHNTRSVAIKLPVINTLRDGHQFSKNPLYQLIGDNGHPLSVRHDVLRQDHLNNSTTLETVMAAYNVGKYNASVPAFAAIPPSPVSAVPGTTIPVAGVNTPHKTASLQGENVTEQMLQYWFLQANPETQKRFLIWAKKQPIH</sequence>
<reference key="1">
    <citation type="submission" date="2007-02" db="EMBL/GenBank/DDBJ databases">
        <title>Complete sequence of chromosome of Yersinia pestis Pestoides F.</title>
        <authorList>
            <consortium name="US DOE Joint Genome Institute"/>
            <person name="Copeland A."/>
            <person name="Lucas S."/>
            <person name="Lapidus A."/>
            <person name="Barry K."/>
            <person name="Detter J.C."/>
            <person name="Glavina del Rio T."/>
            <person name="Hammon N."/>
            <person name="Israni S."/>
            <person name="Dalin E."/>
            <person name="Tice H."/>
            <person name="Pitluck S."/>
            <person name="Di Bartolo G."/>
            <person name="Chain P."/>
            <person name="Malfatti S."/>
            <person name="Shin M."/>
            <person name="Vergez L."/>
            <person name="Schmutz J."/>
            <person name="Larimer F."/>
            <person name="Land M."/>
            <person name="Hauser L."/>
            <person name="Worsham P."/>
            <person name="Chu M."/>
            <person name="Bearden S."/>
            <person name="Garcia E."/>
            <person name="Richardson P."/>
        </authorList>
    </citation>
    <scope>NUCLEOTIDE SEQUENCE [LARGE SCALE GENOMIC DNA]</scope>
    <source>
        <strain>Pestoides F</strain>
    </source>
</reference>